<evidence type="ECO:0000255" key="1">
    <source>
        <dbReference type="HAMAP-Rule" id="MF_00185"/>
    </source>
</evidence>
<organism>
    <name type="scientific">Bacillus cereus (strain AH187)</name>
    <dbReference type="NCBI Taxonomy" id="405534"/>
    <lineage>
        <taxon>Bacteria</taxon>
        <taxon>Bacillati</taxon>
        <taxon>Bacillota</taxon>
        <taxon>Bacilli</taxon>
        <taxon>Bacillales</taxon>
        <taxon>Bacillaceae</taxon>
        <taxon>Bacillus</taxon>
        <taxon>Bacillus cereus group</taxon>
    </lineage>
</organism>
<protein>
    <recommendedName>
        <fullName evidence="1">tRNA dimethylallyltransferase</fullName>
        <ecNumber evidence="1">2.5.1.75</ecNumber>
    </recommendedName>
    <alternativeName>
        <fullName evidence="1">Dimethylallyl diphosphate:tRNA dimethylallyltransferase</fullName>
        <shortName evidence="1">DMAPP:tRNA dimethylallyltransferase</shortName>
        <shortName evidence="1">DMATase</shortName>
    </alternativeName>
    <alternativeName>
        <fullName evidence="1">Isopentenyl-diphosphate:tRNA isopentenyltransferase</fullName>
        <shortName evidence="1">IPP transferase</shortName>
        <shortName evidence="1">IPPT</shortName>
        <shortName evidence="1">IPTase</shortName>
    </alternativeName>
</protein>
<keyword id="KW-0067">ATP-binding</keyword>
<keyword id="KW-0460">Magnesium</keyword>
<keyword id="KW-0547">Nucleotide-binding</keyword>
<keyword id="KW-0808">Transferase</keyword>
<keyword id="KW-0819">tRNA processing</keyword>
<reference key="1">
    <citation type="submission" date="2008-10" db="EMBL/GenBank/DDBJ databases">
        <title>Genome sequence of Bacillus cereus AH187.</title>
        <authorList>
            <person name="Dodson R.J."/>
            <person name="Durkin A.S."/>
            <person name="Rosovitz M.J."/>
            <person name="Rasko D.A."/>
            <person name="Kolsto A.B."/>
            <person name="Okstad O.A."/>
            <person name="Ravel J."/>
            <person name="Sutton G."/>
        </authorList>
    </citation>
    <scope>NUCLEOTIDE SEQUENCE [LARGE SCALE GENOMIC DNA]</scope>
    <source>
        <strain>AH187</strain>
    </source>
</reference>
<comment type="function">
    <text evidence="1">Catalyzes the transfer of a dimethylallyl group onto the adenine at position 37 in tRNAs that read codons beginning with uridine, leading to the formation of N6-(dimethylallyl)adenosine (i(6)A).</text>
</comment>
<comment type="catalytic activity">
    <reaction evidence="1">
        <text>adenosine(37) in tRNA + dimethylallyl diphosphate = N(6)-dimethylallyladenosine(37) in tRNA + diphosphate</text>
        <dbReference type="Rhea" id="RHEA:26482"/>
        <dbReference type="Rhea" id="RHEA-COMP:10162"/>
        <dbReference type="Rhea" id="RHEA-COMP:10375"/>
        <dbReference type="ChEBI" id="CHEBI:33019"/>
        <dbReference type="ChEBI" id="CHEBI:57623"/>
        <dbReference type="ChEBI" id="CHEBI:74411"/>
        <dbReference type="ChEBI" id="CHEBI:74415"/>
        <dbReference type="EC" id="2.5.1.75"/>
    </reaction>
</comment>
<comment type="cofactor">
    <cofactor evidence="1">
        <name>Mg(2+)</name>
        <dbReference type="ChEBI" id="CHEBI:18420"/>
    </cofactor>
</comment>
<comment type="subunit">
    <text evidence="1">Monomer.</text>
</comment>
<comment type="similarity">
    <text evidence="1">Belongs to the IPP transferase family.</text>
</comment>
<accession>B7HKR9</accession>
<name>MIAA_BACC7</name>
<dbReference type="EC" id="2.5.1.75" evidence="1"/>
<dbReference type="EMBL" id="CP001177">
    <property type="protein sequence ID" value="ACJ79405.1"/>
    <property type="molecule type" value="Genomic_DNA"/>
</dbReference>
<dbReference type="SMR" id="B7HKR9"/>
<dbReference type="KEGG" id="bcr:BCAH187_A3764"/>
<dbReference type="HOGENOM" id="CLU_032616_0_1_9"/>
<dbReference type="Proteomes" id="UP000002214">
    <property type="component" value="Chromosome"/>
</dbReference>
<dbReference type="GO" id="GO:0005524">
    <property type="term" value="F:ATP binding"/>
    <property type="evidence" value="ECO:0007669"/>
    <property type="project" value="UniProtKB-UniRule"/>
</dbReference>
<dbReference type="GO" id="GO:0052381">
    <property type="term" value="F:tRNA dimethylallyltransferase activity"/>
    <property type="evidence" value="ECO:0007669"/>
    <property type="project" value="UniProtKB-UniRule"/>
</dbReference>
<dbReference type="GO" id="GO:0006400">
    <property type="term" value="P:tRNA modification"/>
    <property type="evidence" value="ECO:0007669"/>
    <property type="project" value="TreeGrafter"/>
</dbReference>
<dbReference type="FunFam" id="1.10.20.140:FF:000001">
    <property type="entry name" value="tRNA dimethylallyltransferase"/>
    <property type="match status" value="1"/>
</dbReference>
<dbReference type="Gene3D" id="1.10.20.140">
    <property type="match status" value="1"/>
</dbReference>
<dbReference type="Gene3D" id="3.40.50.300">
    <property type="entry name" value="P-loop containing nucleotide triphosphate hydrolases"/>
    <property type="match status" value="1"/>
</dbReference>
<dbReference type="HAMAP" id="MF_00185">
    <property type="entry name" value="IPP_trans"/>
    <property type="match status" value="1"/>
</dbReference>
<dbReference type="InterPro" id="IPR039657">
    <property type="entry name" value="Dimethylallyltransferase"/>
</dbReference>
<dbReference type="InterPro" id="IPR018022">
    <property type="entry name" value="IPT"/>
</dbReference>
<dbReference type="InterPro" id="IPR027417">
    <property type="entry name" value="P-loop_NTPase"/>
</dbReference>
<dbReference type="NCBIfam" id="TIGR00174">
    <property type="entry name" value="miaA"/>
    <property type="match status" value="1"/>
</dbReference>
<dbReference type="PANTHER" id="PTHR11088">
    <property type="entry name" value="TRNA DIMETHYLALLYLTRANSFERASE"/>
    <property type="match status" value="1"/>
</dbReference>
<dbReference type="PANTHER" id="PTHR11088:SF60">
    <property type="entry name" value="TRNA DIMETHYLALLYLTRANSFERASE"/>
    <property type="match status" value="1"/>
</dbReference>
<dbReference type="Pfam" id="PF01715">
    <property type="entry name" value="IPPT"/>
    <property type="match status" value="1"/>
</dbReference>
<dbReference type="SUPFAM" id="SSF52540">
    <property type="entry name" value="P-loop containing nucleoside triphosphate hydrolases"/>
    <property type="match status" value="2"/>
</dbReference>
<feature type="chain" id="PRO_1000118519" description="tRNA dimethylallyltransferase">
    <location>
        <begin position="1"/>
        <end position="317"/>
    </location>
</feature>
<feature type="region of interest" description="Interaction with substrate tRNA" evidence="1">
    <location>
        <begin position="39"/>
        <end position="42"/>
    </location>
</feature>
<feature type="binding site" evidence="1">
    <location>
        <begin position="14"/>
        <end position="21"/>
    </location>
    <ligand>
        <name>ATP</name>
        <dbReference type="ChEBI" id="CHEBI:30616"/>
    </ligand>
</feature>
<feature type="binding site" evidence="1">
    <location>
        <begin position="16"/>
        <end position="21"/>
    </location>
    <ligand>
        <name>substrate</name>
    </ligand>
</feature>
<feature type="site" description="Interaction with substrate tRNA" evidence="1">
    <location>
        <position position="105"/>
    </location>
</feature>
<feature type="site" description="Interaction with substrate tRNA" evidence="1">
    <location>
        <position position="128"/>
    </location>
</feature>
<proteinExistence type="inferred from homology"/>
<gene>
    <name evidence="1" type="primary">miaA</name>
    <name type="ordered locus">BCAH187_A3764</name>
</gene>
<sequence length="317" mass="36709">MGEVQREKVAVIIGPTAVGKTKLSIDLAKALNGEIISGDSMQIYRTMDIGTAKVTKEEMDGIPHYMVDIKNPEESFSVAEFQERVRKHIREITERGKLPIIVGGTGLYIQSVLFDYQFTDDAGDAIYREQMEKLALERGVEYVHKKLQEVDPESAERIHANNVRRVIRALEIFHTTGEKMSDQLEKQENELLYDVSLIGLTMDREMLYDRINLRVDIMMDQGLLEEVEGLYNRGIRDCQSIQAIGYKEIYDYFEDRVSLEEAVSQLKTNSRRYAKRQLTWFRNKMDVTWFDVTDGEKTSEILRYIEGKLQRKSNNSK</sequence>